<comment type="function">
    <text evidence="1">NDH-1 shuttles electrons from NADH, via FMN and iron-sulfur (Fe-S) centers, to quinones in the respiratory chain. Couples the redox reaction to proton translocation (for every two electrons transferred, four hydrogen ions are translocated across the cytoplasmic membrane), and thus conserves the redox energy in a proton gradient (By similarity).</text>
</comment>
<comment type="catalytic activity">
    <reaction evidence="2">
        <text>a quinone + NADH + 5 H(+)(in) = a quinol + NAD(+) + 4 H(+)(out)</text>
        <dbReference type="Rhea" id="RHEA:57888"/>
        <dbReference type="ChEBI" id="CHEBI:15378"/>
        <dbReference type="ChEBI" id="CHEBI:24646"/>
        <dbReference type="ChEBI" id="CHEBI:57540"/>
        <dbReference type="ChEBI" id="CHEBI:57945"/>
        <dbReference type="ChEBI" id="CHEBI:132124"/>
    </reaction>
</comment>
<comment type="cofactor">
    <cofactor evidence="2">
        <name>[4Fe-4S] cluster</name>
        <dbReference type="ChEBI" id="CHEBI:49883"/>
    </cofactor>
    <text evidence="2">Binds 1 [4Fe-4S] cluster.</text>
</comment>
<comment type="subunit">
    <text evidence="2">NDH-1 is composed of 14 different subunits. Subunits NuoB, C, D, E, F, and G constitute the peripheral sector of the complex.</text>
</comment>
<comment type="subcellular location">
    <subcellularLocation>
        <location evidence="2">Cell inner membrane</location>
        <topology evidence="2">Peripheral membrane protein</topology>
        <orientation evidence="2">Cytoplasmic side</orientation>
    </subcellularLocation>
</comment>
<comment type="similarity">
    <text evidence="2">Belongs to the complex I 20 kDa subunit family.</text>
</comment>
<reference key="1">
    <citation type="journal article" date="2011" name="Stand. Genomic Sci.">
        <title>Complete genome sequence of Rhodospirillum rubrum type strain (S1).</title>
        <authorList>
            <person name="Munk A.C."/>
            <person name="Copeland A."/>
            <person name="Lucas S."/>
            <person name="Lapidus A."/>
            <person name="Del Rio T.G."/>
            <person name="Barry K."/>
            <person name="Detter J.C."/>
            <person name="Hammon N."/>
            <person name="Israni S."/>
            <person name="Pitluck S."/>
            <person name="Brettin T."/>
            <person name="Bruce D."/>
            <person name="Han C."/>
            <person name="Tapia R."/>
            <person name="Gilna P."/>
            <person name="Schmutz J."/>
            <person name="Larimer F."/>
            <person name="Land M."/>
            <person name="Kyrpides N.C."/>
            <person name="Mavromatis K."/>
            <person name="Richardson P."/>
            <person name="Rohde M."/>
            <person name="Goeker M."/>
            <person name="Klenk H.P."/>
            <person name="Zhang Y."/>
            <person name="Roberts G.P."/>
            <person name="Reslewic S."/>
            <person name="Schwartz D.C."/>
        </authorList>
    </citation>
    <scope>NUCLEOTIDE SEQUENCE [LARGE SCALE GENOMIC DNA]</scope>
    <source>
        <strain>ATCC 11170 / ATH 1.1.1 / DSM 467 / LMG 4362 / NCIMB 8255 / S1</strain>
    </source>
</reference>
<gene>
    <name evidence="2" type="primary">nuoB</name>
    <name type="ordered locus">Rru_A1556</name>
</gene>
<dbReference type="EC" id="7.1.1.-" evidence="2"/>
<dbReference type="EMBL" id="CP000230">
    <property type="protein sequence ID" value="ABC22356.1"/>
    <property type="molecule type" value="Genomic_DNA"/>
</dbReference>
<dbReference type="RefSeq" id="WP_011389431.1">
    <property type="nucleotide sequence ID" value="NC_007643.1"/>
</dbReference>
<dbReference type="RefSeq" id="YP_426643.1">
    <property type="nucleotide sequence ID" value="NC_007643.1"/>
</dbReference>
<dbReference type="SMR" id="Q2RU39"/>
<dbReference type="STRING" id="269796.Rru_A1556"/>
<dbReference type="EnsemblBacteria" id="ABC22356">
    <property type="protein sequence ID" value="ABC22356"/>
    <property type="gene ID" value="Rru_A1556"/>
</dbReference>
<dbReference type="KEGG" id="rru:Rru_A1556"/>
<dbReference type="PATRIC" id="fig|269796.9.peg.1629"/>
<dbReference type="eggNOG" id="COG0377">
    <property type="taxonomic scope" value="Bacteria"/>
</dbReference>
<dbReference type="HOGENOM" id="CLU_055737_7_3_5"/>
<dbReference type="PhylomeDB" id="Q2RU39"/>
<dbReference type="Proteomes" id="UP000001929">
    <property type="component" value="Chromosome"/>
</dbReference>
<dbReference type="GO" id="GO:0005886">
    <property type="term" value="C:plasma membrane"/>
    <property type="evidence" value="ECO:0007669"/>
    <property type="project" value="UniProtKB-SubCell"/>
</dbReference>
<dbReference type="GO" id="GO:0045271">
    <property type="term" value="C:respiratory chain complex I"/>
    <property type="evidence" value="ECO:0007669"/>
    <property type="project" value="TreeGrafter"/>
</dbReference>
<dbReference type="GO" id="GO:0051539">
    <property type="term" value="F:4 iron, 4 sulfur cluster binding"/>
    <property type="evidence" value="ECO:0007669"/>
    <property type="project" value="UniProtKB-KW"/>
</dbReference>
<dbReference type="GO" id="GO:0005506">
    <property type="term" value="F:iron ion binding"/>
    <property type="evidence" value="ECO:0007669"/>
    <property type="project" value="UniProtKB-UniRule"/>
</dbReference>
<dbReference type="GO" id="GO:0008137">
    <property type="term" value="F:NADH dehydrogenase (ubiquinone) activity"/>
    <property type="evidence" value="ECO:0007669"/>
    <property type="project" value="InterPro"/>
</dbReference>
<dbReference type="GO" id="GO:0050136">
    <property type="term" value="F:NADH:ubiquinone reductase (non-electrogenic) activity"/>
    <property type="evidence" value="ECO:0007669"/>
    <property type="project" value="UniProtKB-UniRule"/>
</dbReference>
<dbReference type="GO" id="GO:0048038">
    <property type="term" value="F:quinone binding"/>
    <property type="evidence" value="ECO:0007669"/>
    <property type="project" value="UniProtKB-KW"/>
</dbReference>
<dbReference type="GO" id="GO:0009060">
    <property type="term" value="P:aerobic respiration"/>
    <property type="evidence" value="ECO:0007669"/>
    <property type="project" value="TreeGrafter"/>
</dbReference>
<dbReference type="GO" id="GO:0015990">
    <property type="term" value="P:electron transport coupled proton transport"/>
    <property type="evidence" value="ECO:0007669"/>
    <property type="project" value="TreeGrafter"/>
</dbReference>
<dbReference type="FunFam" id="3.40.50.12280:FF:000001">
    <property type="entry name" value="NADH-quinone oxidoreductase subunit B 2"/>
    <property type="match status" value="1"/>
</dbReference>
<dbReference type="Gene3D" id="3.40.50.12280">
    <property type="match status" value="1"/>
</dbReference>
<dbReference type="HAMAP" id="MF_01356">
    <property type="entry name" value="NDH1_NuoB"/>
    <property type="match status" value="1"/>
</dbReference>
<dbReference type="InterPro" id="IPR006137">
    <property type="entry name" value="NADH_UbQ_OxRdtase-like_20kDa"/>
</dbReference>
<dbReference type="InterPro" id="IPR006138">
    <property type="entry name" value="NADH_UQ_OxRdtase_20Kd_su"/>
</dbReference>
<dbReference type="NCBIfam" id="TIGR01957">
    <property type="entry name" value="nuoB_fam"/>
    <property type="match status" value="1"/>
</dbReference>
<dbReference type="NCBIfam" id="NF005012">
    <property type="entry name" value="PRK06411.1"/>
    <property type="match status" value="1"/>
</dbReference>
<dbReference type="PANTHER" id="PTHR11995">
    <property type="entry name" value="NADH DEHYDROGENASE"/>
    <property type="match status" value="1"/>
</dbReference>
<dbReference type="PANTHER" id="PTHR11995:SF14">
    <property type="entry name" value="NADH DEHYDROGENASE [UBIQUINONE] IRON-SULFUR PROTEIN 7, MITOCHONDRIAL"/>
    <property type="match status" value="1"/>
</dbReference>
<dbReference type="Pfam" id="PF01058">
    <property type="entry name" value="Oxidored_q6"/>
    <property type="match status" value="1"/>
</dbReference>
<dbReference type="SUPFAM" id="SSF56770">
    <property type="entry name" value="HydA/Nqo6-like"/>
    <property type="match status" value="1"/>
</dbReference>
<dbReference type="PROSITE" id="PS01150">
    <property type="entry name" value="COMPLEX1_20K"/>
    <property type="match status" value="1"/>
</dbReference>
<organism>
    <name type="scientific">Rhodospirillum rubrum (strain ATCC 11170 / ATH 1.1.1 / DSM 467 / LMG 4362 / NCIMB 8255 / S1)</name>
    <dbReference type="NCBI Taxonomy" id="269796"/>
    <lineage>
        <taxon>Bacteria</taxon>
        <taxon>Pseudomonadati</taxon>
        <taxon>Pseudomonadota</taxon>
        <taxon>Alphaproteobacteria</taxon>
        <taxon>Rhodospirillales</taxon>
        <taxon>Rhodospirillaceae</taxon>
        <taxon>Rhodospirillum</taxon>
    </lineage>
</organism>
<accession>Q2RU39</accession>
<keyword id="KW-0004">4Fe-4S</keyword>
<keyword id="KW-0997">Cell inner membrane</keyword>
<keyword id="KW-1003">Cell membrane</keyword>
<keyword id="KW-0408">Iron</keyword>
<keyword id="KW-0411">Iron-sulfur</keyword>
<keyword id="KW-0472">Membrane</keyword>
<keyword id="KW-0479">Metal-binding</keyword>
<keyword id="KW-0520">NAD</keyword>
<keyword id="KW-0874">Quinone</keyword>
<keyword id="KW-1185">Reference proteome</keyword>
<keyword id="KW-1278">Translocase</keyword>
<keyword id="KW-0813">Transport</keyword>
<keyword id="KW-0830">Ubiquinone</keyword>
<proteinExistence type="inferred from homology"/>
<name>NUOB_RHORT</name>
<protein>
    <recommendedName>
        <fullName evidence="2">NADH-quinone oxidoreductase subunit B</fullName>
        <ecNumber evidence="2">7.1.1.-</ecNumber>
    </recommendedName>
    <alternativeName>
        <fullName evidence="2">NADH dehydrogenase I subunit B</fullName>
    </alternativeName>
    <alternativeName>
        <fullName evidence="2">NDH-1 subunit B</fullName>
    </alternativeName>
</protein>
<feature type="chain" id="PRO_0000358470" description="NADH-quinone oxidoreductase subunit B">
    <location>
        <begin position="1"/>
        <end position="185"/>
    </location>
</feature>
<feature type="binding site" evidence="2">
    <location>
        <position position="64"/>
    </location>
    <ligand>
        <name>[4Fe-4S] cluster</name>
        <dbReference type="ChEBI" id="CHEBI:49883"/>
    </ligand>
</feature>
<feature type="binding site" evidence="2">
    <location>
        <position position="65"/>
    </location>
    <ligand>
        <name>[4Fe-4S] cluster</name>
        <dbReference type="ChEBI" id="CHEBI:49883"/>
    </ligand>
</feature>
<feature type="binding site" evidence="2">
    <location>
        <position position="129"/>
    </location>
    <ligand>
        <name>[4Fe-4S] cluster</name>
        <dbReference type="ChEBI" id="CHEBI:49883"/>
    </ligand>
</feature>
<feature type="binding site" evidence="2">
    <location>
        <position position="159"/>
    </location>
    <ligand>
        <name>[4Fe-4S] cluster</name>
        <dbReference type="ChEBI" id="CHEBI:49883"/>
    </ligand>
</feature>
<evidence type="ECO:0000250" key="1"/>
<evidence type="ECO:0000255" key="2">
    <source>
        <dbReference type="HAMAP-Rule" id="MF_01356"/>
    </source>
</evidence>
<sequence length="185" mass="20199">MGVSTPVIVPRGGAPVPPGPDQDLILGQVAREIEEKGFVLSNVDSLVNWARAGSLWPMTFGLACCALEMIHCACARYDLDRFGTVFRPSPRQSDVMIVAGTLTNKMAPALRKVYDQMAEPRWVISMGSCANGGGYYHYSYSVVRGCDRIVPVDIYVPGCPPTSEALLYGVLQLQKKIKRTGALYR</sequence>